<name>EFTU_PROM1</name>
<gene>
    <name evidence="2" type="primary">tuf</name>
    <name type="ordered locus">NATL1_19491</name>
</gene>
<accession>A2C4U5</accession>
<organism>
    <name type="scientific">Prochlorococcus marinus (strain NATL1A)</name>
    <dbReference type="NCBI Taxonomy" id="167555"/>
    <lineage>
        <taxon>Bacteria</taxon>
        <taxon>Bacillati</taxon>
        <taxon>Cyanobacteriota</taxon>
        <taxon>Cyanophyceae</taxon>
        <taxon>Synechococcales</taxon>
        <taxon>Prochlorococcaceae</taxon>
        <taxon>Prochlorococcus</taxon>
    </lineage>
</organism>
<dbReference type="EC" id="3.6.5.3" evidence="2"/>
<dbReference type="EMBL" id="CP000553">
    <property type="protein sequence ID" value="ABM76505.1"/>
    <property type="molecule type" value="Genomic_DNA"/>
</dbReference>
<dbReference type="RefSeq" id="WP_011824476.1">
    <property type="nucleotide sequence ID" value="NC_008819.1"/>
</dbReference>
<dbReference type="SMR" id="A2C4U5"/>
<dbReference type="KEGG" id="pme:NATL1_19491"/>
<dbReference type="eggNOG" id="COG0050">
    <property type="taxonomic scope" value="Bacteria"/>
</dbReference>
<dbReference type="HOGENOM" id="CLU_007265_0_1_3"/>
<dbReference type="Proteomes" id="UP000002592">
    <property type="component" value="Chromosome"/>
</dbReference>
<dbReference type="GO" id="GO:0005829">
    <property type="term" value="C:cytosol"/>
    <property type="evidence" value="ECO:0007669"/>
    <property type="project" value="TreeGrafter"/>
</dbReference>
<dbReference type="GO" id="GO:0005525">
    <property type="term" value="F:GTP binding"/>
    <property type="evidence" value="ECO:0007669"/>
    <property type="project" value="UniProtKB-UniRule"/>
</dbReference>
<dbReference type="GO" id="GO:0003924">
    <property type="term" value="F:GTPase activity"/>
    <property type="evidence" value="ECO:0007669"/>
    <property type="project" value="InterPro"/>
</dbReference>
<dbReference type="GO" id="GO:0003746">
    <property type="term" value="F:translation elongation factor activity"/>
    <property type="evidence" value="ECO:0007669"/>
    <property type="project" value="UniProtKB-UniRule"/>
</dbReference>
<dbReference type="CDD" id="cd01884">
    <property type="entry name" value="EF_Tu"/>
    <property type="match status" value="1"/>
</dbReference>
<dbReference type="CDD" id="cd03697">
    <property type="entry name" value="EFTU_II"/>
    <property type="match status" value="1"/>
</dbReference>
<dbReference type="CDD" id="cd03707">
    <property type="entry name" value="EFTU_III"/>
    <property type="match status" value="1"/>
</dbReference>
<dbReference type="FunFam" id="2.40.30.10:FF:000001">
    <property type="entry name" value="Elongation factor Tu"/>
    <property type="match status" value="1"/>
</dbReference>
<dbReference type="FunFam" id="2.40.30.10:FF:000046">
    <property type="entry name" value="Elongation factor Tu"/>
    <property type="match status" value="1"/>
</dbReference>
<dbReference type="FunFam" id="3.40.50.300:FF:000003">
    <property type="entry name" value="Elongation factor Tu"/>
    <property type="match status" value="1"/>
</dbReference>
<dbReference type="Gene3D" id="3.40.50.300">
    <property type="entry name" value="P-loop containing nucleotide triphosphate hydrolases"/>
    <property type="match status" value="1"/>
</dbReference>
<dbReference type="Gene3D" id="2.40.30.10">
    <property type="entry name" value="Translation factors"/>
    <property type="match status" value="2"/>
</dbReference>
<dbReference type="HAMAP" id="MF_00118_B">
    <property type="entry name" value="EF_Tu_B"/>
    <property type="match status" value="1"/>
</dbReference>
<dbReference type="InterPro" id="IPR041709">
    <property type="entry name" value="EF-Tu_GTP-bd"/>
</dbReference>
<dbReference type="InterPro" id="IPR050055">
    <property type="entry name" value="EF-Tu_GTPase"/>
</dbReference>
<dbReference type="InterPro" id="IPR004161">
    <property type="entry name" value="EFTu-like_2"/>
</dbReference>
<dbReference type="InterPro" id="IPR033720">
    <property type="entry name" value="EFTU_2"/>
</dbReference>
<dbReference type="InterPro" id="IPR031157">
    <property type="entry name" value="G_TR_CS"/>
</dbReference>
<dbReference type="InterPro" id="IPR027417">
    <property type="entry name" value="P-loop_NTPase"/>
</dbReference>
<dbReference type="InterPro" id="IPR005225">
    <property type="entry name" value="Small_GTP-bd"/>
</dbReference>
<dbReference type="InterPro" id="IPR000795">
    <property type="entry name" value="T_Tr_GTP-bd_dom"/>
</dbReference>
<dbReference type="InterPro" id="IPR009000">
    <property type="entry name" value="Transl_B-barrel_sf"/>
</dbReference>
<dbReference type="InterPro" id="IPR009001">
    <property type="entry name" value="Transl_elong_EF1A/Init_IF2_C"/>
</dbReference>
<dbReference type="InterPro" id="IPR004541">
    <property type="entry name" value="Transl_elong_EFTu/EF1A_bac/org"/>
</dbReference>
<dbReference type="InterPro" id="IPR004160">
    <property type="entry name" value="Transl_elong_EFTu/EF1A_C"/>
</dbReference>
<dbReference type="NCBIfam" id="TIGR00485">
    <property type="entry name" value="EF-Tu"/>
    <property type="match status" value="1"/>
</dbReference>
<dbReference type="NCBIfam" id="NF000766">
    <property type="entry name" value="PRK00049.1"/>
    <property type="match status" value="1"/>
</dbReference>
<dbReference type="NCBIfam" id="NF009372">
    <property type="entry name" value="PRK12735.1"/>
    <property type="match status" value="1"/>
</dbReference>
<dbReference type="NCBIfam" id="NF009373">
    <property type="entry name" value="PRK12736.1"/>
    <property type="match status" value="1"/>
</dbReference>
<dbReference type="NCBIfam" id="TIGR00231">
    <property type="entry name" value="small_GTP"/>
    <property type="match status" value="1"/>
</dbReference>
<dbReference type="PANTHER" id="PTHR43721:SF22">
    <property type="entry name" value="ELONGATION FACTOR TU, MITOCHONDRIAL"/>
    <property type="match status" value="1"/>
</dbReference>
<dbReference type="PANTHER" id="PTHR43721">
    <property type="entry name" value="ELONGATION FACTOR TU-RELATED"/>
    <property type="match status" value="1"/>
</dbReference>
<dbReference type="Pfam" id="PF00009">
    <property type="entry name" value="GTP_EFTU"/>
    <property type="match status" value="1"/>
</dbReference>
<dbReference type="Pfam" id="PF03144">
    <property type="entry name" value="GTP_EFTU_D2"/>
    <property type="match status" value="1"/>
</dbReference>
<dbReference type="Pfam" id="PF03143">
    <property type="entry name" value="GTP_EFTU_D3"/>
    <property type="match status" value="1"/>
</dbReference>
<dbReference type="PRINTS" id="PR00315">
    <property type="entry name" value="ELONGATNFCT"/>
</dbReference>
<dbReference type="SUPFAM" id="SSF50465">
    <property type="entry name" value="EF-Tu/eEF-1alpha/eIF2-gamma C-terminal domain"/>
    <property type="match status" value="1"/>
</dbReference>
<dbReference type="SUPFAM" id="SSF52540">
    <property type="entry name" value="P-loop containing nucleoside triphosphate hydrolases"/>
    <property type="match status" value="1"/>
</dbReference>
<dbReference type="SUPFAM" id="SSF50447">
    <property type="entry name" value="Translation proteins"/>
    <property type="match status" value="1"/>
</dbReference>
<dbReference type="PROSITE" id="PS00301">
    <property type="entry name" value="G_TR_1"/>
    <property type="match status" value="1"/>
</dbReference>
<dbReference type="PROSITE" id="PS51722">
    <property type="entry name" value="G_TR_2"/>
    <property type="match status" value="1"/>
</dbReference>
<evidence type="ECO:0000250" key="1"/>
<evidence type="ECO:0000255" key="2">
    <source>
        <dbReference type="HAMAP-Rule" id="MF_00118"/>
    </source>
</evidence>
<feature type="chain" id="PRO_1000015724" description="Elongation factor Tu">
    <location>
        <begin position="1"/>
        <end position="399"/>
    </location>
</feature>
<feature type="domain" description="tr-type G">
    <location>
        <begin position="10"/>
        <end position="204"/>
    </location>
</feature>
<feature type="region of interest" description="G1" evidence="1">
    <location>
        <begin position="19"/>
        <end position="26"/>
    </location>
</feature>
<feature type="region of interest" description="G2" evidence="1">
    <location>
        <begin position="60"/>
        <end position="64"/>
    </location>
</feature>
<feature type="region of interest" description="G3" evidence="1">
    <location>
        <begin position="81"/>
        <end position="84"/>
    </location>
</feature>
<feature type="region of interest" description="G4" evidence="1">
    <location>
        <begin position="136"/>
        <end position="139"/>
    </location>
</feature>
<feature type="region of interest" description="G5" evidence="1">
    <location>
        <begin position="174"/>
        <end position="176"/>
    </location>
</feature>
<feature type="binding site" evidence="2">
    <location>
        <begin position="19"/>
        <end position="26"/>
    </location>
    <ligand>
        <name>GTP</name>
        <dbReference type="ChEBI" id="CHEBI:37565"/>
    </ligand>
</feature>
<feature type="binding site" evidence="2">
    <location>
        <position position="26"/>
    </location>
    <ligand>
        <name>Mg(2+)</name>
        <dbReference type="ChEBI" id="CHEBI:18420"/>
    </ligand>
</feature>
<feature type="binding site" evidence="2">
    <location>
        <begin position="81"/>
        <end position="85"/>
    </location>
    <ligand>
        <name>GTP</name>
        <dbReference type="ChEBI" id="CHEBI:37565"/>
    </ligand>
</feature>
<feature type="binding site" evidence="2">
    <location>
        <begin position="136"/>
        <end position="139"/>
    </location>
    <ligand>
        <name>GTP</name>
        <dbReference type="ChEBI" id="CHEBI:37565"/>
    </ligand>
</feature>
<comment type="function">
    <text evidence="2">GTP hydrolase that promotes the GTP-dependent binding of aminoacyl-tRNA to the A-site of ribosomes during protein biosynthesis.</text>
</comment>
<comment type="catalytic activity">
    <reaction evidence="2">
        <text>GTP + H2O = GDP + phosphate + H(+)</text>
        <dbReference type="Rhea" id="RHEA:19669"/>
        <dbReference type="ChEBI" id="CHEBI:15377"/>
        <dbReference type="ChEBI" id="CHEBI:15378"/>
        <dbReference type="ChEBI" id="CHEBI:37565"/>
        <dbReference type="ChEBI" id="CHEBI:43474"/>
        <dbReference type="ChEBI" id="CHEBI:58189"/>
        <dbReference type="EC" id="3.6.5.3"/>
    </reaction>
    <physiologicalReaction direction="left-to-right" evidence="2">
        <dbReference type="Rhea" id="RHEA:19670"/>
    </physiologicalReaction>
</comment>
<comment type="subunit">
    <text evidence="2">Monomer.</text>
</comment>
<comment type="subcellular location">
    <subcellularLocation>
        <location evidence="2">Cytoplasm</location>
    </subcellularLocation>
</comment>
<comment type="similarity">
    <text evidence="2">Belongs to the TRAFAC class translation factor GTPase superfamily. Classic translation factor GTPase family. EF-Tu/EF-1A subfamily.</text>
</comment>
<proteinExistence type="inferred from homology"/>
<reference key="1">
    <citation type="journal article" date="2007" name="PLoS Genet.">
        <title>Patterns and implications of gene gain and loss in the evolution of Prochlorococcus.</title>
        <authorList>
            <person name="Kettler G.C."/>
            <person name="Martiny A.C."/>
            <person name="Huang K."/>
            <person name="Zucker J."/>
            <person name="Coleman M.L."/>
            <person name="Rodrigue S."/>
            <person name="Chen F."/>
            <person name="Lapidus A."/>
            <person name="Ferriera S."/>
            <person name="Johnson J."/>
            <person name="Steglich C."/>
            <person name="Church G.M."/>
            <person name="Richardson P."/>
            <person name="Chisholm S.W."/>
        </authorList>
    </citation>
    <scope>NUCLEOTIDE SEQUENCE [LARGE SCALE GENOMIC DNA]</scope>
    <source>
        <strain>NATL1A</strain>
    </source>
</reference>
<sequence>MAREKFERNKPHVNIGTIGHVDHGKTTLTAAITKVLAKKGQAEAQDYAEIDGAPEERERGITINTAHVEYETDGRHYAHVDCPGHADYVKNMITGAAQMDGAILVVAATDGAMAQTKEHILLAKQVGVPALVVALNKCDMVDDEEMIELVEMEIRELLTSYDFPGDDIPVVQVSGLKAIEGEADWETKIDDLMTAVDASIPEPEREIDKPFLMAVEDVFSITGRGTVATGRIERGKVTVGEEVEIVGIRDTRLTTVTGVEMFRKLLDEGMAGDNVGLLLRGIQKEDIERGMVLVKKGSITPHTKFEGEVYVLKKEEGGRHTPFFAGYRPQFYIRTTDVTGQITAFTSDDGSNVEMVMPGDRIKMTGELIAPVAIEQGMRFAIREGGRTIGAGVVSKIIE</sequence>
<keyword id="KW-0963">Cytoplasm</keyword>
<keyword id="KW-0251">Elongation factor</keyword>
<keyword id="KW-0342">GTP-binding</keyword>
<keyword id="KW-0378">Hydrolase</keyword>
<keyword id="KW-0460">Magnesium</keyword>
<keyword id="KW-0479">Metal-binding</keyword>
<keyword id="KW-0547">Nucleotide-binding</keyword>
<keyword id="KW-0648">Protein biosynthesis</keyword>
<protein>
    <recommendedName>
        <fullName evidence="2">Elongation factor Tu</fullName>
        <shortName evidence="2">EF-Tu</shortName>
        <ecNumber evidence="2">3.6.5.3</ecNumber>
    </recommendedName>
</protein>